<proteinExistence type="evidence at transcript level"/>
<keyword id="KW-1015">Disulfide bond</keyword>
<keyword id="KW-0872">Ion channel impairing toxin</keyword>
<keyword id="KW-0960">Knottin</keyword>
<keyword id="KW-0964">Secreted</keyword>
<keyword id="KW-0732">Signal</keyword>
<keyword id="KW-0800">Toxin</keyword>
<dbReference type="EMBL" id="GU292954">
    <property type="protein sequence ID" value="ADB56770.1"/>
    <property type="molecule type" value="mRNA"/>
</dbReference>
<dbReference type="ArachnoServer" id="AS001638">
    <property type="toxin name" value="U11-theraphotoxin-Hhn1g"/>
</dbReference>
<dbReference type="GO" id="GO:0005576">
    <property type="term" value="C:extracellular region"/>
    <property type="evidence" value="ECO:0007669"/>
    <property type="project" value="UniProtKB-SubCell"/>
</dbReference>
<dbReference type="GO" id="GO:0019871">
    <property type="term" value="F:sodium channel inhibitor activity"/>
    <property type="evidence" value="ECO:0007669"/>
    <property type="project" value="InterPro"/>
</dbReference>
<dbReference type="GO" id="GO:0090729">
    <property type="term" value="F:toxin activity"/>
    <property type="evidence" value="ECO:0007669"/>
    <property type="project" value="UniProtKB-KW"/>
</dbReference>
<dbReference type="InterPro" id="IPR012627">
    <property type="entry name" value="Toxin_22"/>
</dbReference>
<dbReference type="Pfam" id="PF08092">
    <property type="entry name" value="Toxin_22"/>
    <property type="match status" value="1"/>
</dbReference>
<reference key="1">
    <citation type="journal article" date="2010" name="J. Proteome Res.">
        <title>Molecular diversification of peptide toxins from the tarantula Haplopelma hainanum (Ornithoctonus hainana) venom based on transcriptomic, peptidomic, and genomic analyses.</title>
        <authorList>
            <person name="Tang X."/>
            <person name="Zhang Y."/>
            <person name="Hu W."/>
            <person name="Xu D."/>
            <person name="Tao H."/>
            <person name="Yang X."/>
            <person name="Li Y."/>
            <person name="Jiang L."/>
            <person name="Liang S."/>
        </authorList>
    </citation>
    <scope>NUCLEOTIDE SEQUENCE [LARGE SCALE MRNA]</scope>
    <source>
        <tissue>Venom gland</tissue>
    </source>
</reference>
<protein>
    <recommendedName>
        <fullName>U11-theraphotoxin-Hhn1g</fullName>
        <shortName>U11-TRTX-Hhn1g</shortName>
    </recommendedName>
    <alternativeName>
        <fullName>Hainantoxin-XVI-7</fullName>
        <shortName>HNTX-XVI-7</shortName>
    </alternativeName>
</protein>
<feature type="signal peptide" evidence="2">
    <location>
        <begin position="1"/>
        <end position="21"/>
    </location>
</feature>
<feature type="propeptide" id="PRO_0000400929" evidence="1">
    <location>
        <begin position="22"/>
        <end position="74"/>
    </location>
</feature>
<feature type="peptide" id="PRO_0000400930" description="U11-theraphotoxin-Hhn1g">
    <location>
        <begin position="75"/>
        <end position="113"/>
    </location>
</feature>
<feature type="region of interest" description="Disordered" evidence="3">
    <location>
        <begin position="61"/>
        <end position="83"/>
    </location>
</feature>
<feature type="disulfide bond" evidence="1">
    <location>
        <begin position="75"/>
        <end position="90"/>
    </location>
</feature>
<feature type="disulfide bond" evidence="1">
    <location>
        <begin position="82"/>
        <end position="95"/>
    </location>
</feature>
<feature type="disulfide bond" evidence="1">
    <location>
        <begin position="89"/>
        <end position="110"/>
    </location>
</feature>
<organism>
    <name type="scientific">Cyriopagopus hainanus</name>
    <name type="common">Chinese bird spider</name>
    <name type="synonym">Haplopelma hainanum</name>
    <dbReference type="NCBI Taxonomy" id="209901"/>
    <lineage>
        <taxon>Eukaryota</taxon>
        <taxon>Metazoa</taxon>
        <taxon>Ecdysozoa</taxon>
        <taxon>Arthropoda</taxon>
        <taxon>Chelicerata</taxon>
        <taxon>Arachnida</taxon>
        <taxon>Araneae</taxon>
        <taxon>Mygalomorphae</taxon>
        <taxon>Theraphosidae</taxon>
        <taxon>Haplopelma</taxon>
    </lineage>
</organism>
<sequence length="113" mass="13103">MNTVRVTFLLVFVLAVSLGQADKDENRMEMQEKTEQGKSYLDFAENLLLQKLEELEAKLLEEDSEESRNSRQKRCIGEGVPCDENDPRCCSGLICLKPTLHGIWYKSYYCYKK</sequence>
<name>H16G1_CYRHA</name>
<evidence type="ECO:0000250" key="1"/>
<evidence type="ECO:0000255" key="2"/>
<evidence type="ECO:0000256" key="3">
    <source>
        <dbReference type="SAM" id="MobiDB-lite"/>
    </source>
</evidence>
<evidence type="ECO:0000305" key="4"/>
<accession>D2Y277</accession>
<comment type="function">
    <text evidence="1">Probable ion channel inhibitor.</text>
</comment>
<comment type="subcellular location">
    <subcellularLocation>
        <location evidence="1">Secreted</location>
    </subcellularLocation>
</comment>
<comment type="tissue specificity">
    <text>Expressed by the venom gland.</text>
</comment>
<comment type="domain">
    <text evidence="1">The presence of a 'disulfide through disulfide knot' structurally defines this protein as a knottin.</text>
</comment>
<comment type="similarity">
    <text evidence="4">Belongs to the neurotoxin 14 (magi-1) family. 01 (HNTX-16) subfamily.</text>
</comment>